<gene>
    <name evidence="13" type="primary">PWP2</name>
    <name type="synonym">PWP2H</name>
</gene>
<protein>
    <recommendedName>
        <fullName>Periodic tryptophan protein 2 homolog</fullName>
    </recommendedName>
</protein>
<organism>
    <name type="scientific">Homo sapiens</name>
    <name type="common">Human</name>
    <dbReference type="NCBI Taxonomy" id="9606"/>
    <lineage>
        <taxon>Eukaryota</taxon>
        <taxon>Metazoa</taxon>
        <taxon>Chordata</taxon>
        <taxon>Craniata</taxon>
        <taxon>Vertebrata</taxon>
        <taxon>Euteleostomi</taxon>
        <taxon>Mammalia</taxon>
        <taxon>Eutheria</taxon>
        <taxon>Euarchontoglires</taxon>
        <taxon>Primates</taxon>
        <taxon>Haplorrhini</taxon>
        <taxon>Catarrhini</taxon>
        <taxon>Hominidae</taxon>
        <taxon>Homo</taxon>
    </lineage>
</organism>
<reference key="1">
    <citation type="journal article" date="1996" name="Genomics">
        <title>Cloning the cDNA of human PWP2, which encodes a protein with WD repeats and maps to 21q22.3.</title>
        <authorList>
            <person name="Lalioti M.D."/>
            <person name="Chen H."/>
            <person name="Rossier C."/>
            <person name="Reid J.D."/>
            <person name="Antonarakis S.E."/>
        </authorList>
    </citation>
    <scope>NUCLEOTIDE SEQUENCE [GENOMIC DNA / MRNA]</scope>
    <scope>VARIANT ASN-25</scope>
</reference>
<reference key="2">
    <citation type="journal article" date="1996" name="Cytogenet. Cell Genet.">
        <title>A periodic tryptophan protein 2 gene homologue (PWP2H) in the candidate region of progressive myoclonus epilepsy on 21q22.3.</title>
        <authorList>
            <person name="Yamakawa K."/>
            <person name="Gao D.-Q."/>
            <person name="Korenberg J.R."/>
        </authorList>
    </citation>
    <scope>NUCLEOTIDE SEQUENCE [MRNA]</scope>
    <scope>VARIANT ASN-25</scope>
</reference>
<reference key="3">
    <citation type="journal article" date="1996" name="Genome Res.">
        <title>Isolation and genomic structure of a human homolog of the yeast periodic tryptophan protein 2 (PWP2) gene mapping to 21q22.3.</title>
        <authorList>
            <person name="Lafreniere R.G."/>
            <person name="Rochefort D.L."/>
            <person name="Chretien N."/>
            <person name="Neville C.E."/>
            <person name="Korneluk R.G."/>
            <person name="Zuo L."/>
            <person name="Wei Y."/>
            <person name="Lichter J."/>
            <person name="Rouleau G.A."/>
        </authorList>
    </citation>
    <scope>NUCLEOTIDE SEQUENCE [GENOMIC DNA / MRNA]</scope>
    <scope>VARIANT ASN-25</scope>
</reference>
<reference key="4">
    <citation type="journal article" date="1997" name="Genomics">
        <title>Genomic organization and complete nucleotide sequence of the human PWP2 gene on chromosome 21.</title>
        <authorList>
            <person name="Nagamine K."/>
            <person name="Kudoh J."/>
            <person name="Minoshima S."/>
            <person name="Kawasaki K."/>
            <person name="Asakawa S."/>
            <person name="Ito F."/>
            <person name="Shimizu N."/>
        </authorList>
    </citation>
    <scope>NUCLEOTIDE SEQUENCE [GENOMIC DNA]</scope>
</reference>
<reference key="5">
    <citation type="journal article" date="2004" name="Nat. Genet.">
        <title>Complete sequencing and characterization of 21,243 full-length human cDNAs.</title>
        <authorList>
            <person name="Ota T."/>
            <person name="Suzuki Y."/>
            <person name="Nishikawa T."/>
            <person name="Otsuki T."/>
            <person name="Sugiyama T."/>
            <person name="Irie R."/>
            <person name="Wakamatsu A."/>
            <person name="Hayashi K."/>
            <person name="Sato H."/>
            <person name="Nagai K."/>
            <person name="Kimura K."/>
            <person name="Makita H."/>
            <person name="Sekine M."/>
            <person name="Obayashi M."/>
            <person name="Nishi T."/>
            <person name="Shibahara T."/>
            <person name="Tanaka T."/>
            <person name="Ishii S."/>
            <person name="Yamamoto J."/>
            <person name="Saito K."/>
            <person name="Kawai Y."/>
            <person name="Isono Y."/>
            <person name="Nakamura Y."/>
            <person name="Nagahari K."/>
            <person name="Murakami K."/>
            <person name="Yasuda T."/>
            <person name="Iwayanagi T."/>
            <person name="Wagatsuma M."/>
            <person name="Shiratori A."/>
            <person name="Sudo H."/>
            <person name="Hosoiri T."/>
            <person name="Kaku Y."/>
            <person name="Kodaira H."/>
            <person name="Kondo H."/>
            <person name="Sugawara M."/>
            <person name="Takahashi M."/>
            <person name="Kanda K."/>
            <person name="Yokoi T."/>
            <person name="Furuya T."/>
            <person name="Kikkawa E."/>
            <person name="Omura Y."/>
            <person name="Abe K."/>
            <person name="Kamihara K."/>
            <person name="Katsuta N."/>
            <person name="Sato K."/>
            <person name="Tanikawa M."/>
            <person name="Yamazaki M."/>
            <person name="Ninomiya K."/>
            <person name="Ishibashi T."/>
            <person name="Yamashita H."/>
            <person name="Murakawa K."/>
            <person name="Fujimori K."/>
            <person name="Tanai H."/>
            <person name="Kimata M."/>
            <person name="Watanabe M."/>
            <person name="Hiraoka S."/>
            <person name="Chiba Y."/>
            <person name="Ishida S."/>
            <person name="Ono Y."/>
            <person name="Takiguchi S."/>
            <person name="Watanabe S."/>
            <person name="Yosida M."/>
            <person name="Hotuta T."/>
            <person name="Kusano J."/>
            <person name="Kanehori K."/>
            <person name="Takahashi-Fujii A."/>
            <person name="Hara H."/>
            <person name="Tanase T.-O."/>
            <person name="Nomura Y."/>
            <person name="Togiya S."/>
            <person name="Komai F."/>
            <person name="Hara R."/>
            <person name="Takeuchi K."/>
            <person name="Arita M."/>
            <person name="Imose N."/>
            <person name="Musashino K."/>
            <person name="Yuuki H."/>
            <person name="Oshima A."/>
            <person name="Sasaki N."/>
            <person name="Aotsuka S."/>
            <person name="Yoshikawa Y."/>
            <person name="Matsunawa H."/>
            <person name="Ichihara T."/>
            <person name="Shiohata N."/>
            <person name="Sano S."/>
            <person name="Moriya S."/>
            <person name="Momiyama H."/>
            <person name="Satoh N."/>
            <person name="Takami S."/>
            <person name="Terashima Y."/>
            <person name="Suzuki O."/>
            <person name="Nakagawa S."/>
            <person name="Senoh A."/>
            <person name="Mizoguchi H."/>
            <person name="Goto Y."/>
            <person name="Shimizu F."/>
            <person name="Wakebe H."/>
            <person name="Hishigaki H."/>
            <person name="Watanabe T."/>
            <person name="Sugiyama A."/>
            <person name="Takemoto M."/>
            <person name="Kawakami B."/>
            <person name="Yamazaki M."/>
            <person name="Watanabe K."/>
            <person name="Kumagai A."/>
            <person name="Itakura S."/>
            <person name="Fukuzumi Y."/>
            <person name="Fujimori Y."/>
            <person name="Komiyama M."/>
            <person name="Tashiro H."/>
            <person name="Tanigami A."/>
            <person name="Fujiwara T."/>
            <person name="Ono T."/>
            <person name="Yamada K."/>
            <person name="Fujii Y."/>
            <person name="Ozaki K."/>
            <person name="Hirao M."/>
            <person name="Ohmori Y."/>
            <person name="Kawabata A."/>
            <person name="Hikiji T."/>
            <person name="Kobatake N."/>
            <person name="Inagaki H."/>
            <person name="Ikema Y."/>
            <person name="Okamoto S."/>
            <person name="Okitani R."/>
            <person name="Kawakami T."/>
            <person name="Noguchi S."/>
            <person name="Itoh T."/>
            <person name="Shigeta K."/>
            <person name="Senba T."/>
            <person name="Matsumura K."/>
            <person name="Nakajima Y."/>
            <person name="Mizuno T."/>
            <person name="Morinaga M."/>
            <person name="Sasaki M."/>
            <person name="Togashi T."/>
            <person name="Oyama M."/>
            <person name="Hata H."/>
            <person name="Watanabe M."/>
            <person name="Komatsu T."/>
            <person name="Mizushima-Sugano J."/>
            <person name="Satoh T."/>
            <person name="Shirai Y."/>
            <person name="Takahashi Y."/>
            <person name="Nakagawa K."/>
            <person name="Okumura K."/>
            <person name="Nagase T."/>
            <person name="Nomura N."/>
            <person name="Kikuchi H."/>
            <person name="Masuho Y."/>
            <person name="Yamashita R."/>
            <person name="Nakai K."/>
            <person name="Yada T."/>
            <person name="Nakamura Y."/>
            <person name="Ohara O."/>
            <person name="Isogai T."/>
            <person name="Sugano S."/>
        </authorList>
    </citation>
    <scope>NUCLEOTIDE SEQUENCE [LARGE SCALE MRNA]</scope>
    <scope>VARIANT ASN-25</scope>
    <source>
        <tissue>Brain</tissue>
    </source>
</reference>
<reference key="6">
    <citation type="journal article" date="2000" name="Nature">
        <title>The DNA sequence of human chromosome 21.</title>
        <authorList>
            <person name="Hattori M."/>
            <person name="Fujiyama A."/>
            <person name="Taylor T.D."/>
            <person name="Watanabe H."/>
            <person name="Yada T."/>
            <person name="Park H.-S."/>
            <person name="Toyoda A."/>
            <person name="Ishii K."/>
            <person name="Totoki Y."/>
            <person name="Choi D.-K."/>
            <person name="Groner Y."/>
            <person name="Soeda E."/>
            <person name="Ohki M."/>
            <person name="Takagi T."/>
            <person name="Sakaki Y."/>
            <person name="Taudien S."/>
            <person name="Blechschmidt K."/>
            <person name="Polley A."/>
            <person name="Menzel U."/>
            <person name="Delabar J."/>
            <person name="Kumpf K."/>
            <person name="Lehmann R."/>
            <person name="Patterson D."/>
            <person name="Reichwald K."/>
            <person name="Rump A."/>
            <person name="Schillhabel M."/>
            <person name="Schudy A."/>
            <person name="Zimmermann W."/>
            <person name="Rosenthal A."/>
            <person name="Kudoh J."/>
            <person name="Shibuya K."/>
            <person name="Kawasaki K."/>
            <person name="Asakawa S."/>
            <person name="Shintani A."/>
            <person name="Sasaki T."/>
            <person name="Nagamine K."/>
            <person name="Mitsuyama S."/>
            <person name="Antonarakis S.E."/>
            <person name="Minoshima S."/>
            <person name="Shimizu N."/>
            <person name="Nordsiek G."/>
            <person name="Hornischer K."/>
            <person name="Brandt P."/>
            <person name="Scharfe M."/>
            <person name="Schoen O."/>
            <person name="Desario A."/>
            <person name="Reichelt J."/>
            <person name="Kauer G."/>
            <person name="Bloecker H."/>
            <person name="Ramser J."/>
            <person name="Beck A."/>
            <person name="Klages S."/>
            <person name="Hennig S."/>
            <person name="Riesselmann L."/>
            <person name="Dagand E."/>
            <person name="Wehrmeyer S."/>
            <person name="Borzym K."/>
            <person name="Gardiner K."/>
            <person name="Nizetic D."/>
            <person name="Francis F."/>
            <person name="Lehrach H."/>
            <person name="Reinhardt R."/>
            <person name="Yaspo M.-L."/>
        </authorList>
    </citation>
    <scope>NUCLEOTIDE SEQUENCE [LARGE SCALE GENOMIC DNA]</scope>
</reference>
<reference key="7">
    <citation type="submission" date="2005-09" db="EMBL/GenBank/DDBJ databases">
        <authorList>
            <person name="Mural R.J."/>
            <person name="Istrail S."/>
            <person name="Sutton G.G."/>
            <person name="Florea L."/>
            <person name="Halpern A.L."/>
            <person name="Mobarry C.M."/>
            <person name="Lippert R."/>
            <person name="Walenz B."/>
            <person name="Shatkay H."/>
            <person name="Dew I."/>
            <person name="Miller J.R."/>
            <person name="Flanigan M.J."/>
            <person name="Edwards N.J."/>
            <person name="Bolanos R."/>
            <person name="Fasulo D."/>
            <person name="Halldorsson B.V."/>
            <person name="Hannenhalli S."/>
            <person name="Turner R."/>
            <person name="Yooseph S."/>
            <person name="Lu F."/>
            <person name="Nusskern D.R."/>
            <person name="Shue B.C."/>
            <person name="Zheng X.H."/>
            <person name="Zhong F."/>
            <person name="Delcher A.L."/>
            <person name="Huson D.H."/>
            <person name="Kravitz S.A."/>
            <person name="Mouchard L."/>
            <person name="Reinert K."/>
            <person name="Remington K.A."/>
            <person name="Clark A.G."/>
            <person name="Waterman M.S."/>
            <person name="Eichler E.E."/>
            <person name="Adams M.D."/>
            <person name="Hunkapiller M.W."/>
            <person name="Myers E.W."/>
            <person name="Venter J.C."/>
        </authorList>
    </citation>
    <scope>NUCLEOTIDE SEQUENCE [LARGE SCALE GENOMIC DNA]</scope>
    <scope>VARIANT ASN-25</scope>
</reference>
<reference key="8">
    <citation type="journal article" date="2004" name="Genome Res.">
        <title>The status, quality, and expansion of the NIH full-length cDNA project: the Mammalian Gene Collection (MGC).</title>
        <authorList>
            <consortium name="The MGC Project Team"/>
        </authorList>
    </citation>
    <scope>NUCLEOTIDE SEQUENCE [LARGE SCALE MRNA]</scope>
    <scope>VARIANTS ASN-25 AND ILE-551</scope>
    <source>
        <tissue>Muscle</tissue>
    </source>
</reference>
<reference key="9">
    <citation type="journal article" date="1997" name="Biochem. Biophys. Res. Commun.">
        <title>Genomic organization and complete nucleotide sequence of the TMEM1 gene on human chromosome 21q22.3.</title>
        <authorList>
            <person name="Nagamine K."/>
            <person name="Kudoh J."/>
            <person name="Kawasaki K."/>
            <person name="Minoshima S."/>
            <person name="Asakawa S."/>
            <person name="Ito F."/>
            <person name="Shimizu N."/>
        </authorList>
    </citation>
    <scope>NUCLEOTIDE SEQUENCE [GENOMIC DNA] OF 1-43</scope>
    <scope>VARIANT ASN-25</scope>
</reference>
<reference key="10">
    <citation type="journal article" date="2002" name="Mol. Biol. Cell">
        <title>Functional proteomic analysis of human nucleolus.</title>
        <authorList>
            <person name="Scherl A."/>
            <person name="Coute Y."/>
            <person name="Deon C."/>
            <person name="Calle A."/>
            <person name="Kindbeiter K."/>
            <person name="Sanchez J.-C."/>
            <person name="Greco A."/>
            <person name="Hochstrasser D.F."/>
            <person name="Diaz J.-J."/>
        </authorList>
    </citation>
    <scope>SUBCELLULAR LOCATION [LARGE SCALE ANALYSIS]</scope>
    <source>
        <tissue>Cervix carcinoma</tissue>
    </source>
</reference>
<reference evidence="14 15 16" key="11">
    <citation type="journal article" date="2021" name="Science">
        <title>Nucleolar maturation of the human small subunit processome.</title>
        <authorList>
            <person name="Singh S."/>
            <person name="Vanden Broeck A."/>
            <person name="Miller L."/>
            <person name="Chaker-Margot M."/>
            <person name="Klinge S."/>
        </authorList>
    </citation>
    <scope>STRUCTURE BY ELECTRON MICROSCOPY (2.70 ANGSTROMS)</scope>
    <scope>FUNCTION</scope>
    <scope>SUBUNIT</scope>
    <scope>SUBCELLULAR LOCATION</scope>
</reference>
<name>PWP2_HUMAN</name>
<dbReference type="EMBL" id="X95263">
    <property type="protein sequence ID" value="CAA64560.1"/>
    <property type="molecule type" value="mRNA"/>
</dbReference>
<dbReference type="EMBL" id="X96424">
    <property type="protein sequence ID" value="CAA65284.1"/>
    <property type="molecule type" value="Genomic_DNA"/>
</dbReference>
<dbReference type="EMBL" id="X96425">
    <property type="protein sequence ID" value="CAA65285.1"/>
    <property type="molecule type" value="Genomic_DNA"/>
</dbReference>
<dbReference type="EMBL" id="U53346">
    <property type="protein sequence ID" value="AAB08084.1"/>
    <property type="molecule type" value="mRNA"/>
</dbReference>
<dbReference type="EMBL" id="U56085">
    <property type="protein sequence ID" value="AAC50904.1"/>
    <property type="molecule type" value="mRNA"/>
</dbReference>
<dbReference type="EMBL" id="U56089">
    <property type="protein sequence ID" value="AAC50905.1"/>
    <property type="molecule type" value="Genomic_DNA"/>
</dbReference>
<dbReference type="EMBL" id="U56086">
    <property type="protein sequence ID" value="AAC50905.1"/>
    <property type="status" value="JOINED"/>
    <property type="molecule type" value="Genomic_DNA"/>
</dbReference>
<dbReference type="EMBL" id="U56087">
    <property type="protein sequence ID" value="AAC50905.1"/>
    <property type="status" value="JOINED"/>
    <property type="molecule type" value="Genomic_DNA"/>
</dbReference>
<dbReference type="EMBL" id="U56088">
    <property type="protein sequence ID" value="AAC50905.1"/>
    <property type="status" value="JOINED"/>
    <property type="molecule type" value="Genomic_DNA"/>
</dbReference>
<dbReference type="EMBL" id="AB001517">
    <property type="protein sequence ID" value="BAA21137.1"/>
    <property type="molecule type" value="Genomic_DNA"/>
</dbReference>
<dbReference type="EMBL" id="AK314184">
    <property type="protein sequence ID" value="BAG36865.1"/>
    <property type="molecule type" value="mRNA"/>
</dbReference>
<dbReference type="EMBL" id="AP001753">
    <property type="protein sequence ID" value="BAA95553.1"/>
    <property type="molecule type" value="Genomic_DNA"/>
</dbReference>
<dbReference type="EMBL" id="CH471079">
    <property type="protein sequence ID" value="EAX09458.1"/>
    <property type="molecule type" value="Genomic_DNA"/>
</dbReference>
<dbReference type="EMBL" id="BC013309">
    <property type="protein sequence ID" value="AAH13309.1"/>
    <property type="molecule type" value="mRNA"/>
</dbReference>
<dbReference type="EMBL" id="BC014988">
    <property type="protein sequence ID" value="AAH14988.1"/>
    <property type="molecule type" value="mRNA"/>
</dbReference>
<dbReference type="EMBL" id="AB001523">
    <property type="protein sequence ID" value="BAA21100.1"/>
    <property type="molecule type" value="Genomic_DNA"/>
</dbReference>
<dbReference type="CCDS" id="CCDS33579.1"/>
<dbReference type="RefSeq" id="NP_005040.2">
    <property type="nucleotide sequence ID" value="NM_005049.2"/>
</dbReference>
<dbReference type="RefSeq" id="XP_006723973.1">
    <property type="nucleotide sequence ID" value="XM_006723910.1"/>
</dbReference>
<dbReference type="RefSeq" id="XP_011507205.1">
    <property type="nucleotide sequence ID" value="XM_011508903.2"/>
</dbReference>
<dbReference type="PDB" id="7MQ8">
    <property type="method" value="EM"/>
    <property type="resolution" value="3.60 A"/>
    <property type="chains" value="LO=1-919"/>
</dbReference>
<dbReference type="PDB" id="7MQ9">
    <property type="method" value="EM"/>
    <property type="resolution" value="3.87 A"/>
    <property type="chains" value="LO=1-919"/>
</dbReference>
<dbReference type="PDB" id="7MQA">
    <property type="method" value="EM"/>
    <property type="resolution" value="2.70 A"/>
    <property type="chains" value="LO=1-919"/>
</dbReference>
<dbReference type="PDBsum" id="7MQ8"/>
<dbReference type="PDBsum" id="7MQ9"/>
<dbReference type="PDBsum" id="7MQA"/>
<dbReference type="EMDB" id="EMD-23936"/>
<dbReference type="EMDB" id="EMD-23937"/>
<dbReference type="EMDB" id="EMD-23938"/>
<dbReference type="SMR" id="Q15269"/>
<dbReference type="BioGRID" id="111780">
    <property type="interactions" value="187"/>
</dbReference>
<dbReference type="BioGRID" id="3195276">
    <property type="interactions" value="10"/>
</dbReference>
<dbReference type="ComplexPortal" id="CPX-2688">
    <property type="entry name" value="UTP-B complex"/>
</dbReference>
<dbReference type="FunCoup" id="Q15269">
    <property type="interactions" value="1167"/>
</dbReference>
<dbReference type="IntAct" id="Q15269">
    <property type="interactions" value="74"/>
</dbReference>
<dbReference type="MINT" id="Q15269"/>
<dbReference type="STRING" id="9606.ENSP00000291576"/>
<dbReference type="GlyGen" id="Q15269">
    <property type="glycosylation" value="2 sites, 1 O-linked glycan (2 sites)"/>
</dbReference>
<dbReference type="iPTMnet" id="Q15269"/>
<dbReference type="PhosphoSitePlus" id="Q15269"/>
<dbReference type="SwissPalm" id="Q15269"/>
<dbReference type="BioMuta" id="PWP2"/>
<dbReference type="DMDM" id="116242740"/>
<dbReference type="jPOST" id="Q15269"/>
<dbReference type="MassIVE" id="Q15269"/>
<dbReference type="PaxDb" id="9606-ENSP00000291576"/>
<dbReference type="PeptideAtlas" id="Q15269"/>
<dbReference type="ProteomicsDB" id="60506"/>
<dbReference type="Pumba" id="Q15269"/>
<dbReference type="Antibodypedia" id="34932">
    <property type="antibodies" value="136 antibodies from 20 providers"/>
</dbReference>
<dbReference type="DNASU" id="5822"/>
<dbReference type="Ensembl" id="ENST00000291576.12">
    <property type="protein sequence ID" value="ENSP00000291576.6"/>
    <property type="gene ID" value="ENSG00000241945.8"/>
</dbReference>
<dbReference type="GeneID" id="5822"/>
<dbReference type="KEGG" id="hsa:5822"/>
<dbReference type="MANE-Select" id="ENST00000291576.12">
    <property type="protein sequence ID" value="ENSP00000291576.6"/>
    <property type="RefSeq nucleotide sequence ID" value="NM_005049.3"/>
    <property type="RefSeq protein sequence ID" value="NP_005040.2"/>
</dbReference>
<dbReference type="UCSC" id="uc002zeb.4">
    <property type="organism name" value="human"/>
</dbReference>
<dbReference type="AGR" id="HGNC:9711"/>
<dbReference type="CTD" id="5822"/>
<dbReference type="DisGeNET" id="5822"/>
<dbReference type="GeneCards" id="PWP2"/>
<dbReference type="HGNC" id="HGNC:9711">
    <property type="gene designation" value="PWP2"/>
</dbReference>
<dbReference type="HPA" id="ENSG00000241945">
    <property type="expression patterns" value="Low tissue specificity"/>
</dbReference>
<dbReference type="MIM" id="601475">
    <property type="type" value="gene"/>
</dbReference>
<dbReference type="neXtProt" id="NX_Q15269"/>
<dbReference type="OpenTargets" id="ENSG00000241945"/>
<dbReference type="PharmGKB" id="PA162400451"/>
<dbReference type="VEuPathDB" id="HostDB:ENSG00000241945"/>
<dbReference type="eggNOG" id="KOG0291">
    <property type="taxonomic scope" value="Eukaryota"/>
</dbReference>
<dbReference type="GeneTree" id="ENSGT00550000074981"/>
<dbReference type="HOGENOM" id="CLU_010458_0_0_1"/>
<dbReference type="InParanoid" id="Q15269"/>
<dbReference type="OMA" id="VYEWQSE"/>
<dbReference type="OrthoDB" id="3142434at2759"/>
<dbReference type="PAN-GO" id="Q15269">
    <property type="GO annotations" value="4 GO annotations based on evolutionary models"/>
</dbReference>
<dbReference type="PhylomeDB" id="Q15269"/>
<dbReference type="TreeFam" id="TF300853"/>
<dbReference type="PathwayCommons" id="Q15269"/>
<dbReference type="Reactome" id="R-HSA-6790901">
    <property type="pathway name" value="rRNA modification in the nucleus and cytosol"/>
</dbReference>
<dbReference type="Reactome" id="R-HSA-6791226">
    <property type="pathway name" value="Major pathway of rRNA processing in the nucleolus and cytosol"/>
</dbReference>
<dbReference type="SignaLink" id="Q15269"/>
<dbReference type="BioGRID-ORCS" id="102724159">
    <property type="hits" value="0 hits in 6 CRISPR screens"/>
</dbReference>
<dbReference type="BioGRID-ORCS" id="5822">
    <property type="hits" value="818 hits in 1131 CRISPR screens"/>
</dbReference>
<dbReference type="CD-CODE" id="91857CE7">
    <property type="entry name" value="Nucleolus"/>
</dbReference>
<dbReference type="ChiTaRS" id="PWP2">
    <property type="organism name" value="human"/>
</dbReference>
<dbReference type="GeneWiki" id="PWP2"/>
<dbReference type="Pharos" id="Q15269">
    <property type="development level" value="Tbio"/>
</dbReference>
<dbReference type="PRO" id="PR:Q15269"/>
<dbReference type="Proteomes" id="UP000005640">
    <property type="component" value="Chromosome 21"/>
</dbReference>
<dbReference type="RNAct" id="Q15269">
    <property type="molecule type" value="protein"/>
</dbReference>
<dbReference type="Bgee" id="ENSG00000241945">
    <property type="expression patterns" value="Expressed in stromal cell of endometrium and 95 other cell types or tissues"/>
</dbReference>
<dbReference type="ExpressionAtlas" id="Q15269">
    <property type="expression patterns" value="baseline and differential"/>
</dbReference>
<dbReference type="GO" id="GO:0005654">
    <property type="term" value="C:nucleoplasm"/>
    <property type="evidence" value="ECO:0000304"/>
    <property type="project" value="Reactome"/>
</dbReference>
<dbReference type="GO" id="GO:0034388">
    <property type="term" value="C:Pwp2p-containing subcomplex of 90S preribosome"/>
    <property type="evidence" value="ECO:0000318"/>
    <property type="project" value="GO_Central"/>
</dbReference>
<dbReference type="GO" id="GO:0032040">
    <property type="term" value="C:small-subunit processome"/>
    <property type="evidence" value="ECO:0000314"/>
    <property type="project" value="UniProtKB"/>
</dbReference>
<dbReference type="GO" id="GO:0003723">
    <property type="term" value="F:RNA binding"/>
    <property type="evidence" value="ECO:0007005"/>
    <property type="project" value="UniProtKB"/>
</dbReference>
<dbReference type="GO" id="GO:0000462">
    <property type="term" value="P:maturation of SSU-rRNA from tricistronic rRNA transcript (SSU-rRNA, 5.8S rRNA, LSU-rRNA)"/>
    <property type="evidence" value="ECO:0000318"/>
    <property type="project" value="GO_Central"/>
</dbReference>
<dbReference type="GO" id="GO:0000028">
    <property type="term" value="P:ribosomal small subunit assembly"/>
    <property type="evidence" value="ECO:0000318"/>
    <property type="project" value="GO_Central"/>
</dbReference>
<dbReference type="GO" id="GO:0042274">
    <property type="term" value="P:ribosomal small subunit biogenesis"/>
    <property type="evidence" value="ECO:0000314"/>
    <property type="project" value="UniProtKB"/>
</dbReference>
<dbReference type="CDD" id="cd00200">
    <property type="entry name" value="WD40"/>
    <property type="match status" value="1"/>
</dbReference>
<dbReference type="FunFam" id="2.130.10.10:FF:000216">
    <property type="entry name" value="Periodic tryptophan protein 2 homolog"/>
    <property type="match status" value="1"/>
</dbReference>
<dbReference type="FunFam" id="2.130.10.10:FF:000255">
    <property type="entry name" value="Periodic tryptophan protein 2 homolog"/>
    <property type="match status" value="1"/>
</dbReference>
<dbReference type="FunFam" id="2.130.10.10:FF:000265">
    <property type="entry name" value="periodic tryptophan protein 2 homolog"/>
    <property type="match status" value="1"/>
</dbReference>
<dbReference type="Gene3D" id="2.130.10.10">
    <property type="entry name" value="YVTN repeat-like/Quinoprotein amine dehydrogenase"/>
    <property type="match status" value="3"/>
</dbReference>
<dbReference type="InterPro" id="IPR020472">
    <property type="entry name" value="G-protein_beta_WD-40_rep"/>
</dbReference>
<dbReference type="InterPro" id="IPR027145">
    <property type="entry name" value="PWP2"/>
</dbReference>
<dbReference type="InterPro" id="IPR011047">
    <property type="entry name" value="Quinoprotein_ADH-like_sf"/>
</dbReference>
<dbReference type="InterPro" id="IPR007148">
    <property type="entry name" value="SSU_processome_Utp12"/>
</dbReference>
<dbReference type="InterPro" id="IPR015943">
    <property type="entry name" value="WD40/YVTN_repeat-like_dom_sf"/>
</dbReference>
<dbReference type="InterPro" id="IPR019775">
    <property type="entry name" value="WD40_repeat_CS"/>
</dbReference>
<dbReference type="InterPro" id="IPR001680">
    <property type="entry name" value="WD40_rpt"/>
</dbReference>
<dbReference type="PANTHER" id="PTHR19858:SF0">
    <property type="entry name" value="PERIODIC TRYPTOPHAN PROTEIN 2 HOMOLOG"/>
    <property type="match status" value="1"/>
</dbReference>
<dbReference type="PANTHER" id="PTHR19858">
    <property type="entry name" value="WD40 REPEAT PROTEIN"/>
    <property type="match status" value="1"/>
</dbReference>
<dbReference type="Pfam" id="PF04003">
    <property type="entry name" value="Utp12"/>
    <property type="match status" value="1"/>
</dbReference>
<dbReference type="Pfam" id="PF00400">
    <property type="entry name" value="WD40"/>
    <property type="match status" value="3"/>
</dbReference>
<dbReference type="PRINTS" id="PR00320">
    <property type="entry name" value="GPROTEINBRPT"/>
</dbReference>
<dbReference type="SMART" id="SM00320">
    <property type="entry name" value="WD40"/>
    <property type="match status" value="13"/>
</dbReference>
<dbReference type="SUPFAM" id="SSF63829">
    <property type="entry name" value="Calcium-dependent phosphotriesterase"/>
    <property type="match status" value="1"/>
</dbReference>
<dbReference type="SUPFAM" id="SSF50998">
    <property type="entry name" value="Quinoprotein alcohol dehydrogenase-like"/>
    <property type="match status" value="1"/>
</dbReference>
<dbReference type="PROSITE" id="PS00678">
    <property type="entry name" value="WD_REPEATS_1"/>
    <property type="match status" value="2"/>
</dbReference>
<dbReference type="PROSITE" id="PS50082">
    <property type="entry name" value="WD_REPEATS_2"/>
    <property type="match status" value="3"/>
</dbReference>
<dbReference type="PROSITE" id="PS50294">
    <property type="entry name" value="WD_REPEATS_REGION"/>
    <property type="match status" value="2"/>
</dbReference>
<keyword id="KW-0002">3D-structure</keyword>
<keyword id="KW-0539">Nucleus</keyword>
<keyword id="KW-0597">Phosphoprotein</keyword>
<keyword id="KW-1267">Proteomics identification</keyword>
<keyword id="KW-1185">Reference proteome</keyword>
<keyword id="KW-0677">Repeat</keyword>
<keyword id="KW-0853">WD repeat</keyword>
<sequence>MKFAYRFSNLLGTVYRRGNLNFTCDGNSVISPVGNRVTVFDLKNNKSDTLPLATRYNVKCVGLSPDGRLAIIVDEGGDALLVSLVCRSVLHHFHFKGSVHSVSFSPDGRKFVVTKGNIAQMYHAPGKKREFNAFVLDKTYFGPYDETTCIDWTDDSRCFVVGSKDMSTWVFGAERWDNLIYYALGGHKDAIVACFFESNSLDLYSLSQDGVLCMWQCDTPPEGLRLKPPAGWKADLLQREEEEEEEEDQEGDRETTIRGKATPAEEEKTGKVKYSRLAKYFFNKEGDFNNLTAAAFHKKSHLLVTGFASGIFHLHELPEFNLIHSLSISDQSIASVAINSSGDWIAFGCSGLGQLLVWEWQSESYVLKQQGHFNSMVALAYSPDGQYIVTGGDDGKVKVWNTLSGFCFVTFTEHSSGVTGVTFTATGYVVVTSSMDGTVRAFDLHRYRNFRTFTSPRPTQFSCVAVDASGEIVSAGAQDSFEIFVWSMQTGRLLDVLSGHEGPISGLCFNPMKSVLASASWDKTVRLWDMFDSWRTKETLALTSDALAVTFRPDGAELAVATLNSQITFWDPENAVQTGSIEGRHDLKTGRKELDKITAKHAAKGKAFTALCYSADGHSILAGGMSKFVCIYHVREQILMKRFEISCNLSLDAMEEFLNRRKMTEFGNLALIDQDAGQEDGVAIPLPGVRKGDMSSRHFKPEIRVTSLRFSPTGRCWAATTTEGLLIYSLDTRVLFDPFELDTSVTPGRVREALRQQDFTRAILMALRLNESKLVQEALEAVPRGEIEVVTSSLPELYVEKVLEFLASSFEVSRHLEFYLLWTHKLLMLHGQKLKSRAGTLLPVIQFLQKSIQRHLDDLSKLCSWNHYNMQYALAVSKQRGTKRSLDPLGSEEEAEASEDDSLHLLGGGGRDSEEEMLA</sequence>
<feature type="chain" id="PRO_0000051175" description="Periodic tryptophan protein 2 homolog">
    <location>
        <begin position="1"/>
        <end position="919"/>
    </location>
</feature>
<feature type="repeat" description="WD 1">
    <location>
        <begin position="12"/>
        <end position="50"/>
    </location>
</feature>
<feature type="repeat" description="WD 2">
    <location>
        <begin position="53"/>
        <end position="93"/>
    </location>
</feature>
<feature type="repeat" description="WD 3">
    <location>
        <begin position="94"/>
        <end position="132"/>
    </location>
</feature>
<feature type="repeat" description="WD 4">
    <location>
        <begin position="142"/>
        <end position="181"/>
    </location>
</feature>
<feature type="repeat" description="WD 5">
    <location>
        <begin position="186"/>
        <end position="225"/>
    </location>
</feature>
<feature type="repeat" description="WD 6">
    <location>
        <begin position="286"/>
        <end position="325"/>
    </location>
</feature>
<feature type="repeat" description="WD 7">
    <location>
        <begin position="328"/>
        <end position="368"/>
    </location>
</feature>
<feature type="repeat" description="WD 8">
    <location>
        <begin position="371"/>
        <end position="410"/>
    </location>
</feature>
<feature type="repeat" description="WD 9">
    <location>
        <begin position="413"/>
        <end position="452"/>
    </location>
</feature>
<feature type="repeat" description="WD 10">
    <location>
        <begin position="456"/>
        <end position="498"/>
    </location>
</feature>
<feature type="repeat" description="WD 11">
    <location>
        <begin position="499"/>
        <end position="538"/>
    </location>
</feature>
<feature type="repeat" description="WD 12">
    <location>
        <begin position="541"/>
        <end position="580"/>
    </location>
</feature>
<feature type="repeat" description="WD 13">
    <location>
        <begin position="603"/>
        <end position="642"/>
    </location>
</feature>
<feature type="repeat" description="WD 14">
    <location>
        <begin position="700"/>
        <end position="740"/>
    </location>
</feature>
<feature type="region of interest" description="Disordered" evidence="2">
    <location>
        <begin position="238"/>
        <end position="267"/>
    </location>
</feature>
<feature type="region of interest" description="Disordered" evidence="2">
    <location>
        <begin position="882"/>
        <end position="919"/>
    </location>
</feature>
<feature type="compositionally biased region" description="Acidic residues" evidence="2">
    <location>
        <begin position="240"/>
        <end position="251"/>
    </location>
</feature>
<feature type="compositionally biased region" description="Basic and acidic residues" evidence="2">
    <location>
        <begin position="252"/>
        <end position="267"/>
    </location>
</feature>
<feature type="compositionally biased region" description="Acidic residues" evidence="2">
    <location>
        <begin position="890"/>
        <end position="900"/>
    </location>
</feature>
<feature type="modified residue" description="Phosphoserine" evidence="1">
    <location>
        <position position="898"/>
    </location>
</feature>
<feature type="modified residue" description="Phosphoserine" evidence="1">
    <location>
        <position position="902"/>
    </location>
</feature>
<feature type="sequence variant" id="VAR_028104" description="In dbSNP:rs2020945." evidence="4 5 7 8 9 10 11">
    <original>D</original>
    <variation>N</variation>
    <location>
        <position position="25"/>
    </location>
</feature>
<feature type="sequence variant" id="VAR_053412" description="In dbSNP:rs35001460.">
    <original>E</original>
    <variation>K</variation>
    <location>
        <position position="174"/>
    </location>
</feature>
<feature type="sequence variant" id="VAR_028105" description="In dbSNP:rs17856422." evidence="5">
    <original>F</original>
    <variation>I</variation>
    <location>
        <position position="551"/>
    </location>
</feature>
<feature type="sequence conflict" description="In Ref. 1; CAA64560." evidence="12" ref="1">
    <original>A</original>
    <variation>G</variation>
    <location>
        <position position="719"/>
    </location>
</feature>
<accession>Q15269</accession>
<accession>B2RAG8</accession>
<accession>Q96A77</accession>
<proteinExistence type="evidence at protein level"/>
<comment type="function">
    <text evidence="6">Part of the small subunit (SSU) processome, first precursor of the small eukaryotic ribosomal subunit. During the assembly of the SSU processome in the nucleolus, many ribosome biogenesis factors, an RNA chaperone and ribosomal proteins associate with the nascent pre-rRNA and work in concert to generate RNA folding, modifications, rearrangements and cleavage as well as targeted degradation of pre-ribosomal RNA by the RNA exosome.</text>
</comment>
<comment type="subunit">
    <text evidence="6">Part of the small subunit (SSU) processome, composed of more than 70 proteins and the RNA chaperone small nucleolar RNA (snoRNA) U3.</text>
</comment>
<comment type="interaction">
    <interactant intactId="EBI-722224">
        <id>Q15269</id>
    </interactant>
    <interactant intactId="EBI-592816">
        <id>Q9Y5J1</id>
        <label>UTP18</label>
    </interactant>
    <organismsDiffer>false</organismsDiffer>
    <experiments>2</experiments>
</comment>
<comment type="subcellular location">
    <subcellularLocation>
        <location evidence="3 6">Nucleus</location>
        <location evidence="3 6">Nucleolus</location>
    </subcellularLocation>
</comment>
<comment type="similarity">
    <text evidence="12">Belongs to the WD repeat PWP2 family.</text>
</comment>
<evidence type="ECO:0000250" key="1">
    <source>
        <dbReference type="UniProtKB" id="Q8BU03"/>
    </source>
</evidence>
<evidence type="ECO:0000256" key="2">
    <source>
        <dbReference type="SAM" id="MobiDB-lite"/>
    </source>
</evidence>
<evidence type="ECO:0000269" key="3">
    <source>
    </source>
</evidence>
<evidence type="ECO:0000269" key="4">
    <source>
    </source>
</evidence>
<evidence type="ECO:0000269" key="5">
    <source>
    </source>
</evidence>
<evidence type="ECO:0000269" key="6">
    <source>
    </source>
</evidence>
<evidence type="ECO:0000269" key="7">
    <source>
    </source>
</evidence>
<evidence type="ECO:0000269" key="8">
    <source>
    </source>
</evidence>
<evidence type="ECO:0000269" key="9">
    <source>
    </source>
</evidence>
<evidence type="ECO:0000269" key="10">
    <source>
    </source>
</evidence>
<evidence type="ECO:0000269" key="11">
    <source ref="7"/>
</evidence>
<evidence type="ECO:0000305" key="12"/>
<evidence type="ECO:0000312" key="13">
    <source>
        <dbReference type="HGNC" id="HGNC:9711"/>
    </source>
</evidence>
<evidence type="ECO:0007744" key="14">
    <source>
        <dbReference type="PDB" id="7MQ8"/>
    </source>
</evidence>
<evidence type="ECO:0007744" key="15">
    <source>
        <dbReference type="PDB" id="7MQ9"/>
    </source>
</evidence>
<evidence type="ECO:0007744" key="16">
    <source>
        <dbReference type="PDB" id="7MQA"/>
    </source>
</evidence>